<reference evidence="18" key="1">
    <citation type="journal article" date="2006" name="Int. Arch. Allergy Immunol.">
        <title>Molecular cloning of cDNA, recombinant protein expression and characterization of a buckwheat 16-kDa major allergen.</title>
        <authorList>
            <person name="Koyano S."/>
            <person name="Takagi K."/>
            <person name="Teshima R."/>
            <person name="Sawada J."/>
        </authorList>
    </citation>
    <scope>NUCLEOTIDE SEQUENCE [MRNA]</scope>
    <scope>TISSUE SPECIFICITY</scope>
    <scope>ALLERGEN</scope>
    <source>
        <tissue evidence="9">Seed</tissue>
    </source>
</reference>
<reference evidence="19" key="2">
    <citation type="submission" date="2008-10" db="EMBL/GenBank/DDBJ databases">
        <title>Cloning and prokaryotic expression vector construction of common buckwheat 16 kDa major allergen gene.</title>
        <authorList>
            <person name="Wang X."/>
            <person name="Wu Y."/>
            <person name="Liu Z."/>
        </authorList>
    </citation>
    <scope>NUCLEOTIDE SEQUENCE [MRNA]</scope>
</reference>
<reference key="3">
    <citation type="journal article" date="2002" name="Int. Arch. Allergy Immunol.">
        <title>Pepsin-resistant 16-kD buckwheat protein is associated with immediate hypersensitivity reaction in patients with buckwheat allergy.</title>
        <authorList>
            <person name="Tanaka K."/>
            <person name="Matsumoto K."/>
            <person name="Akasawa A."/>
            <person name="Nakajima T."/>
            <person name="Nagasu T."/>
            <person name="Iikura Y."/>
            <person name="Saito H."/>
        </authorList>
    </citation>
    <scope>PROTEIN SEQUENCE OF 23-37</scope>
    <scope>ALLERGEN</scope>
</reference>
<reference key="4">
    <citation type="journal article" date="2008" name="Biol. Pharm. Bull.">
        <title>Immunological characterization and mutational analysis of the recombinant protein BWp16, a major allergen in buckwheat.</title>
        <authorList>
            <person name="Satoh R."/>
            <person name="Koyano S."/>
            <person name="Takagi K."/>
            <person name="Nakamura R."/>
            <person name="Teshima R."/>
            <person name="Sawada J."/>
        </authorList>
    </citation>
    <scope>ALLERGEN</scope>
    <scope>TISSUE SPECIFICITY</scope>
    <scope>BIOTECHNOLOGY</scope>
    <scope>MUTAGENESIS OF CYS-38; CYS-52; CYS-77; CYS-83; CYS-87; CYS-88; CYS-98; CYS-100; CYS-133 AND CYS-140</scope>
</reference>
<reference key="5">
    <citation type="journal article" date="2009" name="Acta Crystallogr. F">
        <title>Purification, crystallization and preliminary X-ray analysis of a deletion mutant of a major buckwheat allergen.</title>
        <authorList>
            <person name="Kezuka Y."/>
            <person name="Itagaki T."/>
            <person name="Satoh R."/>
            <person name="Teshima R."/>
            <person name="Nonaka T."/>
        </authorList>
    </citation>
    <scope>CRYSTALLIZATION OF 35-149</scope>
    <scope>ALLERGEN</scope>
    <scope>MUTAGENESIS OF 1-MET--MET-34</scope>
</reference>
<reference key="6">
    <citation type="journal article" date="2010" name="Int. Arch. Allergy Immunol.">
        <title>Identification of an IgE-binding epitope of a major buckwheat allergen, BWp16, by SPOTs assay and mimotope screening.</title>
        <authorList>
            <person name="Satoh R."/>
            <person name="Koyano S."/>
            <person name="Takagi K."/>
            <person name="Nakamura R."/>
            <person name="Teshima R."/>
        </authorList>
    </citation>
    <scope>ALLERGEN</scope>
    <scope>BIOTECHNOLOGY</scope>
    <scope>REGION</scope>
    <scope>SITE</scope>
    <scope>MUTAGENESIS OF LYS-120; GLU-121; GLY-122; VAL-123; ARG-124; ASP-125; LEU-126; LYS-127 AND GLU-128</scope>
</reference>
<reference key="7">
    <citation type="journal article" date="2011" name="Arch. Dermatol. Res.">
        <title>Usability of Fag e 2 ImmunoCAP in the diagnosis of buckwheat allergy.</title>
        <authorList>
            <person name="Tohgi K."/>
            <person name="Kohno K."/>
            <person name="Takahashi H."/>
            <person name="Matsuo H."/>
            <person name="Nakayama S."/>
            <person name="Morita E."/>
        </authorList>
    </citation>
    <scope>ALLERGEN</scope>
    <scope>DEVELOPMENTAL STAGE</scope>
    <scope>BIOTECHNOLOGY</scope>
</reference>
<accession>Q2PS07</accession>
<comment type="function">
    <text evidence="13">Seed storage protein.</text>
</comment>
<comment type="tissue specificity">
    <text evidence="3 4">Expressed in seeds (at protein level) (PubMed:16549935, PubMed:18520034).</text>
</comment>
<comment type="developmental stage">
    <text evidence="7">Expressed in shoots 10 days after seeding.</text>
</comment>
<comment type="allergen">
    <text evidence="2 3 4 5 6 7">Causes an allergic reaction in human. Binds to IgE of patients allergic to Japanese buckwheat (PubMed:12372998, PubMed:16549935, PubMed:18520034, PubMed:20054125, PubMed:20407269, PubMed:21461893). Binds to IgE in 90% of the 10 patients tested having immediate hypersensitivity reactions (IRH) including anaphylaxis, but not to IgE from other 10 patients tested without IHR (PubMed:12372998). Natural protein binds to IgE in 76% of the 17 patients tested (PubMed:16549935). Recombinant protein binds to IgE in 83% of the 29 Japanese patients tested (PubMed:18520034). IgE-binding is unaffected by pepsin digestion (PubMed:12372998).</text>
</comment>
<comment type="biotechnology">
    <text evidence="15 16 17">This protein may be helpful in engineering hypoallergens for buckwheat allergy (PubMed:18520034, PubMed:20407269). Determining IgE antibody titer of the natural protein in the blood serum using the ImmunoCAP method could be a reliable way to diagnose buckwheat allergy with a sensitivity of 90% and a specificity of 89.6% using a cut-off value of 2.74 kUA/L (PubMed:21461893).</text>
</comment>
<comment type="similarity">
    <text evidence="13">Belongs to the 2S seed storage albumins family.</text>
</comment>
<keyword id="KW-0020">Allergen</keyword>
<keyword id="KW-0903">Direct protein sequencing</keyword>
<keyword id="KW-1015">Disulfide bond</keyword>
<keyword id="KW-0389">IgE-binding protein</keyword>
<keyword id="KW-0708">Seed storage protein</keyword>
<keyword id="KW-0732">Signal</keyword>
<keyword id="KW-0758">Storage protein</keyword>
<organism evidence="18">
    <name type="scientific">Fagopyrum esculentum</name>
    <name type="common">Common buckwheat</name>
    <name type="synonym">Polygonum fagopyrum</name>
    <dbReference type="NCBI Taxonomy" id="3617"/>
    <lineage>
        <taxon>Eukaryota</taxon>
        <taxon>Viridiplantae</taxon>
        <taxon>Streptophyta</taxon>
        <taxon>Embryophyta</taxon>
        <taxon>Tracheophyta</taxon>
        <taxon>Spermatophyta</taxon>
        <taxon>Magnoliopsida</taxon>
        <taxon>eudicotyledons</taxon>
        <taxon>Gunneridae</taxon>
        <taxon>Pentapetalae</taxon>
        <taxon>Caryophyllales</taxon>
        <taxon>Polygonaceae</taxon>
        <taxon>Polygonoideae</taxon>
        <taxon>Fagopyreae</taxon>
        <taxon>Fagopyrum</taxon>
    </lineage>
</organism>
<evidence type="ECO:0000250" key="1">
    <source>
        <dbReference type="UniProtKB" id="Q647G9"/>
    </source>
</evidence>
<evidence type="ECO:0000269" key="2">
    <source>
    </source>
</evidence>
<evidence type="ECO:0000269" key="3">
    <source>
    </source>
</evidence>
<evidence type="ECO:0000269" key="4">
    <source>
    </source>
</evidence>
<evidence type="ECO:0000269" key="5">
    <source>
    </source>
</evidence>
<evidence type="ECO:0000269" key="6">
    <source>
    </source>
</evidence>
<evidence type="ECO:0000269" key="7">
    <source>
    </source>
</evidence>
<evidence type="ECO:0000303" key="8">
    <source>
    </source>
</evidence>
<evidence type="ECO:0000303" key="9">
    <source>
    </source>
</evidence>
<evidence type="ECO:0000303" key="10">
    <source>
    </source>
</evidence>
<evidence type="ECO:0000303" key="11">
    <source>
    </source>
</evidence>
<evidence type="ECO:0000303" key="12">
    <source>
    </source>
</evidence>
<evidence type="ECO:0000305" key="13"/>
<evidence type="ECO:0000305" key="14">
    <source>
    </source>
</evidence>
<evidence type="ECO:0000305" key="15">
    <source>
    </source>
</evidence>
<evidence type="ECO:0000305" key="16">
    <source>
    </source>
</evidence>
<evidence type="ECO:0000305" key="17">
    <source>
    </source>
</evidence>
<evidence type="ECO:0000312" key="18">
    <source>
        <dbReference type="EMBL" id="ABC18306.1"/>
    </source>
</evidence>
<evidence type="ECO:0000312" key="19">
    <source>
        <dbReference type="EMBL" id="ACJ48243.1"/>
    </source>
</evidence>
<sequence length="149" mass="16941">MKLFIILATATLLIAATQATYPRDEGFDLGETQMSSKCMRQVKMNEPHLKKCNRYIAMDILDDKYAEALSRVEGEGCKSEESCMRGCCVAMKEMDDECVCEWMKMMVENQKGRIGERLIKEGVRDLKELPSKCGLSELECGSRGNRYFV</sequence>
<feature type="signal peptide" evidence="2">
    <location>
        <begin position="1"/>
        <end position="22"/>
    </location>
</feature>
<feature type="chain" id="PRO_5010973053" description="2S seed storage albumin protein" evidence="14">
    <location>
        <begin position="23"/>
        <end position="149"/>
    </location>
</feature>
<feature type="region of interest" description="IgE-binding" evidence="6">
    <location>
        <begin position="121"/>
        <end position="128"/>
    </location>
</feature>
<feature type="site" description="Critical for IgE-binding activity" evidence="6">
    <location>
        <position position="125"/>
    </location>
</feature>
<feature type="disulfide bond" evidence="1">
    <location>
        <begin position="38"/>
        <end position="98"/>
    </location>
</feature>
<feature type="disulfide bond" evidence="1">
    <location>
        <begin position="52"/>
        <end position="87"/>
    </location>
</feature>
<feature type="disulfide bond" evidence="1">
    <location>
        <begin position="88"/>
        <end position="133"/>
    </location>
</feature>
<feature type="disulfide bond" evidence="1">
    <location>
        <begin position="100"/>
        <end position="140"/>
    </location>
</feature>
<feature type="mutagenesis site" description="No effect in IgE-binding activity." evidence="5">
    <location>
        <begin position="1"/>
        <end position="34"/>
    </location>
</feature>
<feature type="mutagenesis site" description="No effect in IgE-binding activity." evidence="4">
    <original>C</original>
    <variation>S</variation>
    <location>
        <position position="38"/>
    </location>
</feature>
<feature type="mutagenesis site" description="Decreased IgE-binding activity." evidence="4">
    <original>C</original>
    <variation>S</variation>
    <location>
        <position position="52"/>
    </location>
</feature>
<feature type="mutagenesis site" description="Decreased IgE-binding activity." evidence="4">
    <original>C</original>
    <variation>S</variation>
    <location>
        <position position="77"/>
    </location>
</feature>
<feature type="mutagenesis site" description="Decreased IgE-binding activity." evidence="4">
    <original>C</original>
    <variation>S</variation>
    <location>
        <position position="83"/>
    </location>
</feature>
<feature type="mutagenesis site" description="Decreased IgE-binding activity. Susceptible to pepsin digestion by simulated gastric fluid (SGF)." evidence="4">
    <original>C</original>
    <variation>S</variation>
    <location>
        <position position="87"/>
    </location>
</feature>
<feature type="mutagenesis site" description="Decreased IgE-binding activity. Susceptible to pepsin digestion by simulated gastric fluid (SGF)." evidence="4">
    <original>C</original>
    <variation>S</variation>
    <location>
        <position position="88"/>
    </location>
</feature>
<feature type="mutagenesis site" description="Decreased IgE-binding activity." evidence="4">
    <original>C</original>
    <variation>S</variation>
    <location>
        <position position="98"/>
    </location>
</feature>
<feature type="mutagenesis site" description="No effect in IgE-binding activity." evidence="4">
    <original>C</original>
    <variation>S</variation>
    <location>
        <position position="100"/>
    </location>
</feature>
<feature type="mutagenesis site" description="Decreased IgE-binding activity." evidence="6">
    <original>K</original>
    <variation>A</variation>
    <location>
        <position position="120"/>
    </location>
</feature>
<feature type="mutagenesis site" description="Decreased IgE-binding activity." evidence="6">
    <original>E</original>
    <variation>A</variation>
    <location>
        <position position="121"/>
    </location>
</feature>
<feature type="mutagenesis site" description="Decreased IgE-binding activity." evidence="6">
    <original>G</original>
    <variation>A</variation>
    <location>
        <position position="122"/>
    </location>
</feature>
<feature type="mutagenesis site" description="Decreased IgE-binding activity." evidence="6">
    <original>V</original>
    <variation>A</variation>
    <location>
        <position position="123"/>
    </location>
</feature>
<feature type="mutagenesis site" description="Decreased IgE-binding activity." evidence="6">
    <original>R</original>
    <variation>A</variation>
    <location>
        <position position="124"/>
    </location>
</feature>
<feature type="mutagenesis site" description="Significantly decreased IgE-binding activity." evidence="6">
    <original>D</original>
    <variation>A</variation>
    <location>
        <position position="125"/>
    </location>
</feature>
<feature type="mutagenesis site" description="Decreased IgE-binding activity." evidence="6">
    <original>L</original>
    <variation>A</variation>
    <location>
        <position position="126"/>
    </location>
</feature>
<feature type="mutagenesis site" description="Decreased IgE-binding activity." evidence="6">
    <original>K</original>
    <variation>A</variation>
    <location>
        <position position="127"/>
    </location>
</feature>
<feature type="mutagenesis site" description="Decreased IgE-binding activity." evidence="6">
    <original>E</original>
    <variation>A</variation>
    <location>
        <position position="128"/>
    </location>
</feature>
<feature type="mutagenesis site" description="Decreased IgE-binding activity." evidence="4">
    <original>C</original>
    <variation>S</variation>
    <location>
        <position position="133"/>
    </location>
</feature>
<feature type="mutagenesis site" description="No effect in IgE-binding activity." evidence="4">
    <original>C</original>
    <variation>S</variation>
    <location>
        <position position="140"/>
    </location>
</feature>
<name>2SS_FAGES</name>
<proteinExistence type="evidence at protein level"/>
<dbReference type="EMBL" id="DQ304682">
    <property type="protein sequence ID" value="ABC18306.1"/>
    <property type="molecule type" value="mRNA"/>
</dbReference>
<dbReference type="EMBL" id="FJ430161">
    <property type="protein sequence ID" value="ACJ48243.1"/>
    <property type="molecule type" value="mRNA"/>
</dbReference>
<dbReference type="SMR" id="Q2PS07"/>
<dbReference type="Allergome" id="1187">
    <property type="allergen name" value="Fag e 2"/>
</dbReference>
<dbReference type="Allergome" id="8711">
    <property type="allergen name" value="Fag e 2.0101"/>
</dbReference>
<dbReference type="GO" id="GO:0043245">
    <property type="term" value="C:extraorganismal space"/>
    <property type="evidence" value="ECO:0000314"/>
    <property type="project" value="UniProtKB"/>
</dbReference>
<dbReference type="GO" id="GO:0019863">
    <property type="term" value="F:IgE binding"/>
    <property type="evidence" value="ECO:0007669"/>
    <property type="project" value="UniProtKB-KW"/>
</dbReference>
<dbReference type="GO" id="GO:0045735">
    <property type="term" value="F:nutrient reservoir activity"/>
    <property type="evidence" value="ECO:0000305"/>
    <property type="project" value="UniProtKB"/>
</dbReference>
<dbReference type="GO" id="GO:0048367">
    <property type="term" value="P:shoot system development"/>
    <property type="evidence" value="ECO:0000270"/>
    <property type="project" value="UniProtKB"/>
</dbReference>
<dbReference type="Gene3D" id="1.10.110.10">
    <property type="entry name" value="Plant lipid-transfer and hydrophobic proteins"/>
    <property type="match status" value="1"/>
</dbReference>
<dbReference type="InterPro" id="IPR036312">
    <property type="entry name" value="Bifun_inhib/LTP/seed_sf"/>
</dbReference>
<dbReference type="InterPro" id="IPR000617">
    <property type="entry name" value="Napin/2SS/CON"/>
</dbReference>
<dbReference type="PANTHER" id="PTHR35496">
    <property type="entry name" value="2S SEED STORAGE PROTEIN 1-RELATED"/>
    <property type="match status" value="1"/>
</dbReference>
<dbReference type="PANTHER" id="PTHR35496:SF4">
    <property type="entry name" value="2S SULFUR-RICH SEED STORAGE PROTEIN 2-LIKE"/>
    <property type="match status" value="1"/>
</dbReference>
<dbReference type="SUPFAM" id="SSF47699">
    <property type="entry name" value="Bifunctional inhibitor/lipid-transfer protein/seed storage 2S albumin"/>
    <property type="match status" value="1"/>
</dbReference>
<protein>
    <recommendedName>
        <fullName evidence="13">2S seed storage albumin protein</fullName>
    </recommendedName>
    <alternativeName>
        <fullName evidence="8 11 12">16 kDa buckwheat protein</fullName>
        <shortName evidence="9 10 11 12">BWp16</shortName>
    </alternativeName>
    <alternativeName>
        <fullName evidence="13">2S albumin</fullName>
    </alternativeName>
    <alternativeName>
        <fullName evidence="13">2S seed storage protein</fullName>
    </alternativeName>
    <alternativeName>
        <fullName evidence="9 10 11 12">Buckwheat 16 kDa major allergen</fullName>
    </alternativeName>
    <allergenName evidence="13">Fag e 2.0101</allergenName>
</protein>